<feature type="chain" id="PRO_0000214046" description="Phenol 2-monooxygenase">
    <location>
        <begin position="1"/>
        <end position="607"/>
    </location>
</feature>
<feature type="region of interest" description="Disordered" evidence="2">
    <location>
        <begin position="1"/>
        <end position="28"/>
    </location>
</feature>
<feature type="binding site" evidence="1">
    <location>
        <begin position="37"/>
        <end position="66"/>
    </location>
    <ligand>
        <name>FAD</name>
        <dbReference type="ChEBI" id="CHEBI:57692"/>
    </ligand>
</feature>
<feature type="binding site" evidence="1">
    <location>
        <begin position="319"/>
        <end position="329"/>
    </location>
    <ligand>
        <name>FAD</name>
        <dbReference type="ChEBI" id="CHEBI:57692"/>
    </ligand>
</feature>
<comment type="catalytic activity">
    <reaction>
        <text>phenol + NADPH + O2 + H(+) = catechol + NADP(+) + H2O</text>
        <dbReference type="Rhea" id="RHEA:17061"/>
        <dbReference type="ChEBI" id="CHEBI:15377"/>
        <dbReference type="ChEBI" id="CHEBI:15378"/>
        <dbReference type="ChEBI" id="CHEBI:15379"/>
        <dbReference type="ChEBI" id="CHEBI:15882"/>
        <dbReference type="ChEBI" id="CHEBI:18135"/>
        <dbReference type="ChEBI" id="CHEBI:57783"/>
        <dbReference type="ChEBI" id="CHEBI:58349"/>
        <dbReference type="EC" id="1.14.13.7"/>
    </reaction>
</comment>
<comment type="cofactor">
    <cofactor>
        <name>FAD</name>
        <dbReference type="ChEBI" id="CHEBI:57692"/>
    </cofactor>
</comment>
<comment type="pathway">
    <text>Aromatic compound metabolism; phenol degradation.</text>
</comment>
<comment type="similarity">
    <text evidence="3">Belongs to the PheA/TfdB FAD monooxygenase family.</text>
</comment>
<organism>
    <name type="scientific">Pseudomonas sp. (strain EST1001)</name>
    <dbReference type="NCBI Taxonomy" id="69012"/>
    <lineage>
        <taxon>Bacteria</taxon>
        <taxon>Pseudomonadati</taxon>
        <taxon>Pseudomonadota</taxon>
    </lineage>
</organism>
<proteinExistence type="inferred from homology"/>
<accession>P31020</accession>
<gene>
    <name type="primary">pheA</name>
</gene>
<dbReference type="EC" id="1.14.13.7"/>
<dbReference type="EMBL" id="M57500">
    <property type="status" value="NOT_ANNOTATED_CDS"/>
    <property type="molecule type" value="Genomic_DNA"/>
</dbReference>
<dbReference type="PIR" id="JQ1132">
    <property type="entry name" value="JQ1132"/>
</dbReference>
<dbReference type="SMR" id="P31020"/>
<dbReference type="UniPathway" id="UPA00728"/>
<dbReference type="GO" id="GO:0071949">
    <property type="term" value="F:FAD binding"/>
    <property type="evidence" value="ECO:0007669"/>
    <property type="project" value="InterPro"/>
</dbReference>
<dbReference type="GO" id="GO:0018662">
    <property type="term" value="F:phenol 2-monooxygenase activity"/>
    <property type="evidence" value="ECO:0007669"/>
    <property type="project" value="UniProtKB-EC"/>
</dbReference>
<dbReference type="GO" id="GO:0019336">
    <property type="term" value="P:phenol-containing compound catabolic process"/>
    <property type="evidence" value="ECO:0007669"/>
    <property type="project" value="UniProtKB-UniPathway"/>
</dbReference>
<dbReference type="Gene3D" id="3.40.30.120">
    <property type="match status" value="1"/>
</dbReference>
<dbReference type="Gene3D" id="3.30.9.10">
    <property type="entry name" value="D-Amino Acid Oxidase, subunit A, domain 2"/>
    <property type="match status" value="1"/>
</dbReference>
<dbReference type="Gene3D" id="3.50.50.60">
    <property type="entry name" value="FAD/NAD(P)-binding domain"/>
    <property type="match status" value="1"/>
</dbReference>
<dbReference type="InterPro" id="IPR002938">
    <property type="entry name" value="FAD-bd"/>
</dbReference>
<dbReference type="InterPro" id="IPR036188">
    <property type="entry name" value="FAD/NAD-bd_sf"/>
</dbReference>
<dbReference type="InterPro" id="IPR050641">
    <property type="entry name" value="RIFMO-like"/>
</dbReference>
<dbReference type="PANTHER" id="PTHR43004:SF8">
    <property type="entry name" value="FAD-BINDING DOMAIN-CONTAINING PROTEIN-RELATED"/>
    <property type="match status" value="1"/>
</dbReference>
<dbReference type="PANTHER" id="PTHR43004">
    <property type="entry name" value="TRK SYSTEM POTASSIUM UPTAKE PROTEIN"/>
    <property type="match status" value="1"/>
</dbReference>
<dbReference type="Pfam" id="PF01494">
    <property type="entry name" value="FAD_binding_3"/>
    <property type="match status" value="1"/>
</dbReference>
<dbReference type="Pfam" id="PF21274">
    <property type="entry name" value="Rng_hyd_C"/>
    <property type="match status" value="1"/>
</dbReference>
<dbReference type="PRINTS" id="PR00420">
    <property type="entry name" value="RNGMNOXGNASE"/>
</dbReference>
<dbReference type="SUPFAM" id="SSF51905">
    <property type="entry name" value="FAD/NAD(P)-binding domain"/>
    <property type="match status" value="1"/>
</dbReference>
<protein>
    <recommendedName>
        <fullName>Phenol 2-monooxygenase</fullName>
        <ecNumber>1.14.13.7</ecNumber>
    </recommendedName>
    <alternativeName>
        <fullName>Phenol hydroxylase</fullName>
    </alternativeName>
</protein>
<geneLocation type="plasmid">
    <name>pEST1412</name>
</geneLocation>
<evidence type="ECO:0000255" key="1"/>
<evidence type="ECO:0000256" key="2">
    <source>
        <dbReference type="SAM" id="MobiDB-lite"/>
    </source>
</evidence>
<evidence type="ECO:0000305" key="3"/>
<reference key="1">
    <citation type="journal article" date="1991" name="Gene">
        <title>Sequence of the gene (pheA) encoding phenol monooxygenase from Pseudomonas sp. EST1001: expression in Escherichia coli and Pseudomonas putida.</title>
        <authorList>
            <person name="Nurk A."/>
            <person name="Kasak L."/>
            <person name="Kivisaar M."/>
        </authorList>
    </citation>
    <scope>NUCLEOTIDE SEQUENCE [GENOMIC DNA]</scope>
</reference>
<name>PHEA_PSEUE</name>
<sequence>MTTQRNDNLEQPGRSVIFDDGLSATDTPNETNVVETEVLIVGSGPAGSSAAMFLSTQGISNIMITKYRWTANTPRAHITNQRTMEILRDAGIEDQVLAEAVPHELMGDTVYCESMAGEEIGRRPTWGTRPDRRADYELASPAMPCDIPQTLLEPIMLKNATMRGTQTQFSTEYLSHTQDDKGVSVQVLNRLTGQEYTIRAKYLIGADGARSKVAADIGGSMNITFKADLSHWRPSALDPVLGLPPRIEYRWPRRWFDRMVRPWNEWLVVWGFDINQEPPKLNDDEAIQIVRNLVGIEDLDVEILGYSLWGNNDQYATHLQKGRVCCAGDAIHKHPPSHGLGSNTSIQDSYNLCWKLACVLKGQAGPELLETYSTERAPIAKQIVTRANGSSSEYKPIFDALGVTDATTNDEFVEKLALRKENSPEGARRRAALRAALDNKDYEFNAQGTEIGQFYDSSAVITDGQKRPAMTEDPMLHHQKSTFPGLRLPHAWLGDAKEKYSTHDIAEGTRFTIFTGITGQAWADAAVRVAERLGIDLKAVVIGEGQPVQDLYGDWLRQREVDEDGVILVRPDKHIGWRAQSMVADPETALFDVLSGCCIPSKPALRI</sequence>
<keyword id="KW-0058">Aromatic hydrocarbons catabolism</keyword>
<keyword id="KW-0274">FAD</keyword>
<keyword id="KW-0285">Flavoprotein</keyword>
<keyword id="KW-0503">Monooxygenase</keyword>
<keyword id="KW-0521">NADP</keyword>
<keyword id="KW-0560">Oxidoreductase</keyword>
<keyword id="KW-0614">Plasmid</keyword>